<protein>
    <recommendedName>
        <fullName evidence="1">Large ribosomal subunit protein bL31B</fullName>
    </recommendedName>
    <alternativeName>
        <fullName evidence="2">50S ribosomal protein L31 type B</fullName>
    </alternativeName>
</protein>
<dbReference type="EMBL" id="CP000086">
    <property type="protein sequence ID" value="ABC38895.1"/>
    <property type="status" value="ALT_INIT"/>
    <property type="molecule type" value="Genomic_DNA"/>
</dbReference>
<dbReference type="RefSeq" id="WP_009890781.1">
    <property type="nucleotide sequence ID" value="NZ_CP008785.1"/>
</dbReference>
<dbReference type="SMR" id="Q2SWG5"/>
<dbReference type="GeneID" id="45121931"/>
<dbReference type="KEGG" id="bte:BTH_I2213"/>
<dbReference type="HOGENOM" id="CLU_114306_2_1_4"/>
<dbReference type="Proteomes" id="UP000001930">
    <property type="component" value="Chromosome I"/>
</dbReference>
<dbReference type="GO" id="GO:1990904">
    <property type="term" value="C:ribonucleoprotein complex"/>
    <property type="evidence" value="ECO:0007669"/>
    <property type="project" value="UniProtKB-KW"/>
</dbReference>
<dbReference type="GO" id="GO:0005840">
    <property type="term" value="C:ribosome"/>
    <property type="evidence" value="ECO:0007669"/>
    <property type="project" value="UniProtKB-KW"/>
</dbReference>
<dbReference type="GO" id="GO:0003735">
    <property type="term" value="F:structural constituent of ribosome"/>
    <property type="evidence" value="ECO:0007669"/>
    <property type="project" value="InterPro"/>
</dbReference>
<dbReference type="GO" id="GO:0006412">
    <property type="term" value="P:translation"/>
    <property type="evidence" value="ECO:0007669"/>
    <property type="project" value="UniProtKB-UniRule"/>
</dbReference>
<dbReference type="Gene3D" id="4.10.830.30">
    <property type="entry name" value="Ribosomal protein L31"/>
    <property type="match status" value="1"/>
</dbReference>
<dbReference type="HAMAP" id="MF_00502">
    <property type="entry name" value="Ribosomal_bL31_2"/>
    <property type="match status" value="1"/>
</dbReference>
<dbReference type="InterPro" id="IPR034704">
    <property type="entry name" value="Ribosomal_bL28/bL31-like_sf"/>
</dbReference>
<dbReference type="InterPro" id="IPR002150">
    <property type="entry name" value="Ribosomal_bL31"/>
</dbReference>
<dbReference type="InterPro" id="IPR027493">
    <property type="entry name" value="Ribosomal_bL31_B"/>
</dbReference>
<dbReference type="InterPro" id="IPR042105">
    <property type="entry name" value="Ribosomal_bL31_sf"/>
</dbReference>
<dbReference type="NCBIfam" id="TIGR00105">
    <property type="entry name" value="L31"/>
    <property type="match status" value="1"/>
</dbReference>
<dbReference type="NCBIfam" id="NF002462">
    <property type="entry name" value="PRK01678.1"/>
    <property type="match status" value="1"/>
</dbReference>
<dbReference type="PANTHER" id="PTHR33280">
    <property type="entry name" value="50S RIBOSOMAL PROTEIN L31, CHLOROPLASTIC"/>
    <property type="match status" value="1"/>
</dbReference>
<dbReference type="PANTHER" id="PTHR33280:SF1">
    <property type="entry name" value="LARGE RIBOSOMAL SUBUNIT PROTEIN BL31C"/>
    <property type="match status" value="1"/>
</dbReference>
<dbReference type="Pfam" id="PF01197">
    <property type="entry name" value="Ribosomal_L31"/>
    <property type="match status" value="1"/>
</dbReference>
<dbReference type="PRINTS" id="PR01249">
    <property type="entry name" value="RIBOSOMALL31"/>
</dbReference>
<dbReference type="SUPFAM" id="SSF143800">
    <property type="entry name" value="L28p-like"/>
    <property type="match status" value="1"/>
</dbReference>
<reference key="1">
    <citation type="journal article" date="2005" name="BMC Genomics">
        <title>Bacterial genome adaptation to niches: divergence of the potential virulence genes in three Burkholderia species of different survival strategies.</title>
        <authorList>
            <person name="Kim H.S."/>
            <person name="Schell M.A."/>
            <person name="Yu Y."/>
            <person name="Ulrich R.L."/>
            <person name="Sarria S.H."/>
            <person name="Nierman W.C."/>
            <person name="DeShazer D."/>
        </authorList>
    </citation>
    <scope>NUCLEOTIDE SEQUENCE [LARGE SCALE GENOMIC DNA]</scope>
    <source>
        <strain>ATCC 700388 / DSM 13276 / CCUG 48851 / CIP 106301 / E264</strain>
    </source>
</reference>
<name>RL31B_BURTA</name>
<accession>Q2SWG5</accession>
<organism>
    <name type="scientific">Burkholderia thailandensis (strain ATCC 700388 / DSM 13276 / CCUG 48851 / CIP 106301 / E264)</name>
    <dbReference type="NCBI Taxonomy" id="271848"/>
    <lineage>
        <taxon>Bacteria</taxon>
        <taxon>Pseudomonadati</taxon>
        <taxon>Pseudomonadota</taxon>
        <taxon>Betaproteobacteria</taxon>
        <taxon>Burkholderiales</taxon>
        <taxon>Burkholderiaceae</taxon>
        <taxon>Burkholderia</taxon>
        <taxon>pseudomallei group</taxon>
    </lineage>
</organism>
<sequence length="87" mass="9864">MKQGIHPDYREVVFQDMSNGFKFITRSTIQTRETIELDGKTYPLAKIEVSSESHSFYTGQQKIMDTAGRVEKFKNKFGARASGKAAK</sequence>
<keyword id="KW-0687">Ribonucleoprotein</keyword>
<keyword id="KW-0689">Ribosomal protein</keyword>
<evidence type="ECO:0000255" key="1">
    <source>
        <dbReference type="HAMAP-Rule" id="MF_00502"/>
    </source>
</evidence>
<evidence type="ECO:0000305" key="2"/>
<feature type="chain" id="PRO_0000259105" description="Large ribosomal subunit protein bL31B">
    <location>
        <begin position="1"/>
        <end position="87"/>
    </location>
</feature>
<comment type="subunit">
    <text evidence="1">Part of the 50S ribosomal subunit.</text>
</comment>
<comment type="similarity">
    <text evidence="1">Belongs to the bacterial ribosomal protein bL31 family. Type B subfamily.</text>
</comment>
<comment type="sequence caution" evidence="2">
    <conflict type="erroneous initiation">
        <sequence resource="EMBL-CDS" id="ABC38895"/>
    </conflict>
</comment>
<gene>
    <name evidence="1" type="primary">rpmE2</name>
    <name type="ordered locus">BTH_I2213</name>
</gene>
<proteinExistence type="inferred from homology"/>